<accession>B2VE71</accession>
<evidence type="ECO:0000255" key="1">
    <source>
        <dbReference type="HAMAP-Rule" id="MF_00741"/>
    </source>
</evidence>
<name>PUR5_ERWT9</name>
<feature type="chain" id="PRO_1000193014" description="Phosphoribosylformylglycinamidine cyclo-ligase">
    <location>
        <begin position="1"/>
        <end position="346"/>
    </location>
</feature>
<proteinExistence type="inferred from homology"/>
<sequence>MTDKTSLSYKDAGVDIDAGNALVDRIKGVVKKTRRPEVMGGLGGFGALCALPQKYREPILVSGTDGVGTKLRLAMDLKRHDAIGIDLVAMCVNDLVVSGAEPLFFLDYYATGKLDVDTAASVITGIAEGCSQSGCALVGGETAEMPGMYHGEDYDVAGFCVGVVEKSEIIDGSKVAEGDVLIALGSSGPHSNGYSLVRKILAFSNTDPETTQLEGKPLADHLLAPTRIYVKNILSLIEQVDVHAIAHLTGGGFWENIPRVLPDNTQAVLDESSWEWPAVFGWMQQAGNVSRFEMYRTFNCGVGMVIALSAADADKALRLMNDAGEKAWKIGVIKASDSEERVVINA</sequence>
<comment type="catalytic activity">
    <reaction evidence="1">
        <text>2-formamido-N(1)-(5-O-phospho-beta-D-ribosyl)acetamidine + ATP = 5-amino-1-(5-phospho-beta-D-ribosyl)imidazole + ADP + phosphate + H(+)</text>
        <dbReference type="Rhea" id="RHEA:23032"/>
        <dbReference type="ChEBI" id="CHEBI:15378"/>
        <dbReference type="ChEBI" id="CHEBI:30616"/>
        <dbReference type="ChEBI" id="CHEBI:43474"/>
        <dbReference type="ChEBI" id="CHEBI:137981"/>
        <dbReference type="ChEBI" id="CHEBI:147287"/>
        <dbReference type="ChEBI" id="CHEBI:456216"/>
        <dbReference type="EC" id="6.3.3.1"/>
    </reaction>
</comment>
<comment type="pathway">
    <text evidence="1">Purine metabolism; IMP biosynthesis via de novo pathway; 5-amino-1-(5-phospho-D-ribosyl)imidazole from N(2)-formyl-N(1)-(5-phospho-D-ribosyl)glycinamide: step 2/2.</text>
</comment>
<comment type="subcellular location">
    <subcellularLocation>
        <location evidence="1">Cytoplasm</location>
    </subcellularLocation>
</comment>
<comment type="similarity">
    <text evidence="1">Belongs to the AIR synthase family.</text>
</comment>
<dbReference type="EC" id="6.3.3.1" evidence="1"/>
<dbReference type="EMBL" id="CU468135">
    <property type="protein sequence ID" value="CAO96102.1"/>
    <property type="molecule type" value="Genomic_DNA"/>
</dbReference>
<dbReference type="RefSeq" id="WP_012440802.1">
    <property type="nucleotide sequence ID" value="NC_010694.1"/>
</dbReference>
<dbReference type="SMR" id="B2VE71"/>
<dbReference type="STRING" id="465817.ETA_10560"/>
<dbReference type="KEGG" id="eta:ETA_10560"/>
<dbReference type="eggNOG" id="COG0150">
    <property type="taxonomic scope" value="Bacteria"/>
</dbReference>
<dbReference type="HOGENOM" id="CLU_047116_0_0_6"/>
<dbReference type="OrthoDB" id="9777881at2"/>
<dbReference type="UniPathway" id="UPA00074">
    <property type="reaction ID" value="UER00129"/>
</dbReference>
<dbReference type="Proteomes" id="UP000001726">
    <property type="component" value="Chromosome"/>
</dbReference>
<dbReference type="GO" id="GO:0005829">
    <property type="term" value="C:cytosol"/>
    <property type="evidence" value="ECO:0007669"/>
    <property type="project" value="TreeGrafter"/>
</dbReference>
<dbReference type="GO" id="GO:0005524">
    <property type="term" value="F:ATP binding"/>
    <property type="evidence" value="ECO:0007669"/>
    <property type="project" value="UniProtKB-KW"/>
</dbReference>
<dbReference type="GO" id="GO:0004637">
    <property type="term" value="F:phosphoribosylamine-glycine ligase activity"/>
    <property type="evidence" value="ECO:0007669"/>
    <property type="project" value="TreeGrafter"/>
</dbReference>
<dbReference type="GO" id="GO:0004641">
    <property type="term" value="F:phosphoribosylformylglycinamidine cyclo-ligase activity"/>
    <property type="evidence" value="ECO:0007669"/>
    <property type="project" value="UniProtKB-UniRule"/>
</dbReference>
<dbReference type="GO" id="GO:0006189">
    <property type="term" value="P:'de novo' IMP biosynthetic process"/>
    <property type="evidence" value="ECO:0007669"/>
    <property type="project" value="UniProtKB-UniRule"/>
</dbReference>
<dbReference type="GO" id="GO:0046084">
    <property type="term" value="P:adenine biosynthetic process"/>
    <property type="evidence" value="ECO:0007669"/>
    <property type="project" value="TreeGrafter"/>
</dbReference>
<dbReference type="CDD" id="cd02196">
    <property type="entry name" value="PurM"/>
    <property type="match status" value="1"/>
</dbReference>
<dbReference type="FunFam" id="3.30.1330.10:FF:000001">
    <property type="entry name" value="Phosphoribosylformylglycinamidine cyclo-ligase"/>
    <property type="match status" value="1"/>
</dbReference>
<dbReference type="FunFam" id="3.90.650.10:FF:000001">
    <property type="entry name" value="Phosphoribosylformylglycinamidine cyclo-ligase"/>
    <property type="match status" value="1"/>
</dbReference>
<dbReference type="Gene3D" id="3.90.650.10">
    <property type="entry name" value="PurM-like C-terminal domain"/>
    <property type="match status" value="1"/>
</dbReference>
<dbReference type="Gene3D" id="3.30.1330.10">
    <property type="entry name" value="PurM-like, N-terminal domain"/>
    <property type="match status" value="1"/>
</dbReference>
<dbReference type="HAMAP" id="MF_00741">
    <property type="entry name" value="AIRS"/>
    <property type="match status" value="1"/>
</dbReference>
<dbReference type="InterPro" id="IPR010918">
    <property type="entry name" value="PurM-like_C_dom"/>
</dbReference>
<dbReference type="InterPro" id="IPR036676">
    <property type="entry name" value="PurM-like_C_sf"/>
</dbReference>
<dbReference type="InterPro" id="IPR016188">
    <property type="entry name" value="PurM-like_N"/>
</dbReference>
<dbReference type="InterPro" id="IPR036921">
    <property type="entry name" value="PurM-like_N_sf"/>
</dbReference>
<dbReference type="InterPro" id="IPR004733">
    <property type="entry name" value="PurM_cligase"/>
</dbReference>
<dbReference type="NCBIfam" id="TIGR00878">
    <property type="entry name" value="purM"/>
    <property type="match status" value="1"/>
</dbReference>
<dbReference type="PANTHER" id="PTHR10520:SF12">
    <property type="entry name" value="TRIFUNCTIONAL PURINE BIOSYNTHETIC PROTEIN ADENOSINE-3"/>
    <property type="match status" value="1"/>
</dbReference>
<dbReference type="PANTHER" id="PTHR10520">
    <property type="entry name" value="TRIFUNCTIONAL PURINE BIOSYNTHETIC PROTEIN ADENOSINE-3-RELATED"/>
    <property type="match status" value="1"/>
</dbReference>
<dbReference type="Pfam" id="PF00586">
    <property type="entry name" value="AIRS"/>
    <property type="match status" value="1"/>
</dbReference>
<dbReference type="Pfam" id="PF02769">
    <property type="entry name" value="AIRS_C"/>
    <property type="match status" value="1"/>
</dbReference>
<dbReference type="SUPFAM" id="SSF56042">
    <property type="entry name" value="PurM C-terminal domain-like"/>
    <property type="match status" value="1"/>
</dbReference>
<dbReference type="SUPFAM" id="SSF55326">
    <property type="entry name" value="PurM N-terminal domain-like"/>
    <property type="match status" value="1"/>
</dbReference>
<keyword id="KW-0067">ATP-binding</keyword>
<keyword id="KW-0963">Cytoplasm</keyword>
<keyword id="KW-0436">Ligase</keyword>
<keyword id="KW-0547">Nucleotide-binding</keyword>
<keyword id="KW-0658">Purine biosynthesis</keyword>
<keyword id="KW-1185">Reference proteome</keyword>
<gene>
    <name evidence="1" type="primary">purM</name>
    <name type="ordered locus">ETA_10560</name>
</gene>
<protein>
    <recommendedName>
        <fullName evidence="1">Phosphoribosylformylglycinamidine cyclo-ligase</fullName>
        <ecNumber evidence="1">6.3.3.1</ecNumber>
    </recommendedName>
    <alternativeName>
        <fullName evidence="1">AIR synthase</fullName>
    </alternativeName>
    <alternativeName>
        <fullName evidence="1">AIRS</fullName>
    </alternativeName>
    <alternativeName>
        <fullName evidence="1">Phosphoribosyl-aminoimidazole synthetase</fullName>
    </alternativeName>
</protein>
<organism>
    <name type="scientific">Erwinia tasmaniensis (strain DSM 17950 / CFBP 7177 / CIP 109463 / NCPPB 4357 / Et1/99)</name>
    <dbReference type="NCBI Taxonomy" id="465817"/>
    <lineage>
        <taxon>Bacteria</taxon>
        <taxon>Pseudomonadati</taxon>
        <taxon>Pseudomonadota</taxon>
        <taxon>Gammaproteobacteria</taxon>
        <taxon>Enterobacterales</taxon>
        <taxon>Erwiniaceae</taxon>
        <taxon>Erwinia</taxon>
    </lineage>
</organism>
<reference key="1">
    <citation type="journal article" date="2008" name="Environ. Microbiol.">
        <title>The genome of Erwinia tasmaniensis strain Et1/99, a non-pathogenic bacterium in the genus Erwinia.</title>
        <authorList>
            <person name="Kube M."/>
            <person name="Migdoll A.M."/>
            <person name="Mueller I."/>
            <person name="Kuhl H."/>
            <person name="Beck A."/>
            <person name="Reinhardt R."/>
            <person name="Geider K."/>
        </authorList>
    </citation>
    <scope>NUCLEOTIDE SEQUENCE [LARGE SCALE GENOMIC DNA]</scope>
    <source>
        <strain>DSM 17950 / CFBP 7177 / CIP 109463 / NCPPB 4357 / Et1/99</strain>
    </source>
</reference>